<name>SYC_FLAPJ</name>
<dbReference type="EC" id="6.1.1.16" evidence="1"/>
<dbReference type="EMBL" id="AM398681">
    <property type="protein sequence ID" value="CAL42703.1"/>
    <property type="molecule type" value="Genomic_DNA"/>
</dbReference>
<dbReference type="RefSeq" id="WP_011962759.1">
    <property type="nucleotide sequence ID" value="NC_009613.3"/>
</dbReference>
<dbReference type="RefSeq" id="YP_001295519.1">
    <property type="nucleotide sequence ID" value="NC_009613.3"/>
</dbReference>
<dbReference type="SMR" id="A6GX80"/>
<dbReference type="STRING" id="402612.FP0598"/>
<dbReference type="EnsemblBacteria" id="CAL42703">
    <property type="protein sequence ID" value="CAL42703"/>
    <property type="gene ID" value="FP0598"/>
</dbReference>
<dbReference type="GeneID" id="66552723"/>
<dbReference type="KEGG" id="fps:FP0598"/>
<dbReference type="PATRIC" id="fig|402612.5.peg.610"/>
<dbReference type="eggNOG" id="COG0215">
    <property type="taxonomic scope" value="Bacteria"/>
</dbReference>
<dbReference type="HOGENOM" id="CLU_013528_0_1_10"/>
<dbReference type="OrthoDB" id="9815130at2"/>
<dbReference type="Proteomes" id="UP000006394">
    <property type="component" value="Chromosome"/>
</dbReference>
<dbReference type="GO" id="GO:0005829">
    <property type="term" value="C:cytosol"/>
    <property type="evidence" value="ECO:0007669"/>
    <property type="project" value="TreeGrafter"/>
</dbReference>
<dbReference type="GO" id="GO:0005524">
    <property type="term" value="F:ATP binding"/>
    <property type="evidence" value="ECO:0007669"/>
    <property type="project" value="UniProtKB-UniRule"/>
</dbReference>
<dbReference type="GO" id="GO:0004817">
    <property type="term" value="F:cysteine-tRNA ligase activity"/>
    <property type="evidence" value="ECO:0007669"/>
    <property type="project" value="UniProtKB-UniRule"/>
</dbReference>
<dbReference type="GO" id="GO:0008270">
    <property type="term" value="F:zinc ion binding"/>
    <property type="evidence" value="ECO:0007669"/>
    <property type="project" value="UniProtKB-UniRule"/>
</dbReference>
<dbReference type="GO" id="GO:0006423">
    <property type="term" value="P:cysteinyl-tRNA aminoacylation"/>
    <property type="evidence" value="ECO:0007669"/>
    <property type="project" value="UniProtKB-UniRule"/>
</dbReference>
<dbReference type="CDD" id="cd00672">
    <property type="entry name" value="CysRS_core"/>
    <property type="match status" value="1"/>
</dbReference>
<dbReference type="Gene3D" id="1.20.120.1910">
    <property type="entry name" value="Cysteine-tRNA ligase, C-terminal anti-codon recognition domain"/>
    <property type="match status" value="1"/>
</dbReference>
<dbReference type="Gene3D" id="3.40.50.620">
    <property type="entry name" value="HUPs"/>
    <property type="match status" value="1"/>
</dbReference>
<dbReference type="HAMAP" id="MF_00041">
    <property type="entry name" value="Cys_tRNA_synth"/>
    <property type="match status" value="1"/>
</dbReference>
<dbReference type="InterPro" id="IPR015803">
    <property type="entry name" value="Cys-tRNA-ligase"/>
</dbReference>
<dbReference type="InterPro" id="IPR015273">
    <property type="entry name" value="Cys-tRNA-synt_Ia_DALR"/>
</dbReference>
<dbReference type="InterPro" id="IPR024909">
    <property type="entry name" value="Cys-tRNA/MSH_ligase"/>
</dbReference>
<dbReference type="InterPro" id="IPR056411">
    <property type="entry name" value="CysS_C"/>
</dbReference>
<dbReference type="InterPro" id="IPR014729">
    <property type="entry name" value="Rossmann-like_a/b/a_fold"/>
</dbReference>
<dbReference type="InterPro" id="IPR032678">
    <property type="entry name" value="tRNA-synt_1_cat_dom"/>
</dbReference>
<dbReference type="InterPro" id="IPR009080">
    <property type="entry name" value="tRNAsynth_Ia_anticodon-bd"/>
</dbReference>
<dbReference type="NCBIfam" id="TIGR00435">
    <property type="entry name" value="cysS"/>
    <property type="match status" value="1"/>
</dbReference>
<dbReference type="PANTHER" id="PTHR10890:SF3">
    <property type="entry name" value="CYSTEINE--TRNA LIGASE, CYTOPLASMIC"/>
    <property type="match status" value="1"/>
</dbReference>
<dbReference type="PANTHER" id="PTHR10890">
    <property type="entry name" value="CYSTEINYL-TRNA SYNTHETASE"/>
    <property type="match status" value="1"/>
</dbReference>
<dbReference type="Pfam" id="PF23493">
    <property type="entry name" value="CysS_C"/>
    <property type="match status" value="1"/>
</dbReference>
<dbReference type="Pfam" id="PF09190">
    <property type="entry name" value="DALR_2"/>
    <property type="match status" value="1"/>
</dbReference>
<dbReference type="Pfam" id="PF01406">
    <property type="entry name" value="tRNA-synt_1e"/>
    <property type="match status" value="1"/>
</dbReference>
<dbReference type="PRINTS" id="PR00983">
    <property type="entry name" value="TRNASYNTHCYS"/>
</dbReference>
<dbReference type="SMART" id="SM00840">
    <property type="entry name" value="DALR_2"/>
    <property type="match status" value="1"/>
</dbReference>
<dbReference type="SUPFAM" id="SSF47323">
    <property type="entry name" value="Anticodon-binding domain of a subclass of class I aminoacyl-tRNA synthetases"/>
    <property type="match status" value="1"/>
</dbReference>
<dbReference type="SUPFAM" id="SSF52374">
    <property type="entry name" value="Nucleotidylyl transferase"/>
    <property type="match status" value="1"/>
</dbReference>
<feature type="chain" id="PRO_0000332825" description="Cysteine--tRNA ligase">
    <location>
        <begin position="1"/>
        <end position="495"/>
    </location>
</feature>
<feature type="short sequence motif" description="'HIGH' region">
    <location>
        <begin position="37"/>
        <end position="47"/>
    </location>
</feature>
<feature type="short sequence motif" description="'KMSKS' region">
    <location>
        <begin position="287"/>
        <end position="291"/>
    </location>
</feature>
<feature type="binding site" evidence="1">
    <location>
        <position position="35"/>
    </location>
    <ligand>
        <name>Zn(2+)</name>
        <dbReference type="ChEBI" id="CHEBI:29105"/>
    </ligand>
</feature>
<feature type="binding site" evidence="1">
    <location>
        <position position="230"/>
    </location>
    <ligand>
        <name>Zn(2+)</name>
        <dbReference type="ChEBI" id="CHEBI:29105"/>
    </ligand>
</feature>
<feature type="binding site" evidence="1">
    <location>
        <position position="255"/>
    </location>
    <ligand>
        <name>Zn(2+)</name>
        <dbReference type="ChEBI" id="CHEBI:29105"/>
    </ligand>
</feature>
<feature type="binding site" evidence="1">
    <location>
        <position position="259"/>
    </location>
    <ligand>
        <name>Zn(2+)</name>
        <dbReference type="ChEBI" id="CHEBI:29105"/>
    </ligand>
</feature>
<feature type="binding site" evidence="1">
    <location>
        <position position="290"/>
    </location>
    <ligand>
        <name>ATP</name>
        <dbReference type="ChEBI" id="CHEBI:30616"/>
    </ligand>
</feature>
<evidence type="ECO:0000255" key="1">
    <source>
        <dbReference type="HAMAP-Rule" id="MF_00041"/>
    </source>
</evidence>
<keyword id="KW-0030">Aminoacyl-tRNA synthetase</keyword>
<keyword id="KW-0067">ATP-binding</keyword>
<keyword id="KW-0963">Cytoplasm</keyword>
<keyword id="KW-0436">Ligase</keyword>
<keyword id="KW-0479">Metal-binding</keyword>
<keyword id="KW-0547">Nucleotide-binding</keyword>
<keyword id="KW-0648">Protein biosynthesis</keyword>
<keyword id="KW-1185">Reference proteome</keyword>
<keyword id="KW-0862">Zinc</keyword>
<organism>
    <name type="scientific">Flavobacterium psychrophilum (strain ATCC 49511 / DSM 21280 / CIP 103535 / JIP02/86)</name>
    <dbReference type="NCBI Taxonomy" id="402612"/>
    <lineage>
        <taxon>Bacteria</taxon>
        <taxon>Pseudomonadati</taxon>
        <taxon>Bacteroidota</taxon>
        <taxon>Flavobacteriia</taxon>
        <taxon>Flavobacteriales</taxon>
        <taxon>Flavobacteriaceae</taxon>
        <taxon>Flavobacterium</taxon>
    </lineage>
</organism>
<gene>
    <name evidence="1" type="primary">cysS</name>
    <name type="ordered locus">FP0598</name>
</gene>
<reference key="1">
    <citation type="journal article" date="2007" name="Nat. Biotechnol.">
        <title>Complete genome sequence of the fish pathogen Flavobacterium psychrophilum.</title>
        <authorList>
            <person name="Duchaud E."/>
            <person name="Boussaha M."/>
            <person name="Loux V."/>
            <person name="Bernardet J.-F."/>
            <person name="Michel C."/>
            <person name="Kerouault B."/>
            <person name="Mondot S."/>
            <person name="Nicolas P."/>
            <person name="Bossy R."/>
            <person name="Caron C."/>
            <person name="Bessieres P."/>
            <person name="Gibrat J.-F."/>
            <person name="Claverol S."/>
            <person name="Dumetz F."/>
            <person name="Le Henaff M."/>
            <person name="Benmansour A."/>
        </authorList>
    </citation>
    <scope>NUCLEOTIDE SEQUENCE [LARGE SCALE GENOMIC DNA]</scope>
    <source>
        <strain>ATCC 49511 / DSM 21280 / CIP 103535 / JIP02/86</strain>
    </source>
</reference>
<proteinExistence type="inferred from homology"/>
<comment type="catalytic activity">
    <reaction evidence="1">
        <text>tRNA(Cys) + L-cysteine + ATP = L-cysteinyl-tRNA(Cys) + AMP + diphosphate</text>
        <dbReference type="Rhea" id="RHEA:17773"/>
        <dbReference type="Rhea" id="RHEA-COMP:9661"/>
        <dbReference type="Rhea" id="RHEA-COMP:9679"/>
        <dbReference type="ChEBI" id="CHEBI:30616"/>
        <dbReference type="ChEBI" id="CHEBI:33019"/>
        <dbReference type="ChEBI" id="CHEBI:35235"/>
        <dbReference type="ChEBI" id="CHEBI:78442"/>
        <dbReference type="ChEBI" id="CHEBI:78517"/>
        <dbReference type="ChEBI" id="CHEBI:456215"/>
        <dbReference type="EC" id="6.1.1.16"/>
    </reaction>
</comment>
<comment type="cofactor">
    <cofactor evidence="1">
        <name>Zn(2+)</name>
        <dbReference type="ChEBI" id="CHEBI:29105"/>
    </cofactor>
    <text evidence="1">Binds 1 zinc ion per subunit.</text>
</comment>
<comment type="subunit">
    <text evidence="1">Monomer.</text>
</comment>
<comment type="subcellular location">
    <subcellularLocation>
        <location evidence="1">Cytoplasm</location>
    </subcellularLocation>
</comment>
<comment type="similarity">
    <text evidence="1">Belongs to the class-I aminoacyl-tRNA synthetase family.</text>
</comment>
<sequence length="495" mass="56153">MPLYKSQSIKIYNSLSGEKEIFSPINEGNIGMYVCGPTVYSNVHLGNVRTFMSFDVIYRYFLHLGYKVRYIRNITDVGHIVDDVDHGEDKIAKKAKLEQLEPMEIVQRYTVDFHNVLKAYNLLPPSIEPTATGHIIEQIEIVKTIINKGIGYESNGSVYFDVVKFNESNHYGKLSGRNIEDMLANTRDTDGQSDKRNHQDFALWKKAEPEHIMRWPSPWSDGFPGWHLECTAMSTKYLGSHFDIHGGGMDLKFPHHECEIAQGEACTGQEPVNYWMHANMLTLNGKKMSKSTGNNILPSEIYSGGSPFLTKAFSASVARFFMLQAHYRSNLDFTNDAILAAEKGFYRLMEAIGSLKNTAQFTTSNTTSIDIKAWKQNCYDAMNDDFNTPILIAHLFEGVRFVNVLKENKETITTEDLLDFLTTMNAFVFDVLGLEDEKLATNNNDKLDGVVEMLIQMRKQARDNKDFAMSDQIRDQLLALGIQLKDSKEGTTFSI</sequence>
<accession>A6GX80</accession>
<protein>
    <recommendedName>
        <fullName evidence="1">Cysteine--tRNA ligase</fullName>
        <ecNumber evidence="1">6.1.1.16</ecNumber>
    </recommendedName>
    <alternativeName>
        <fullName evidence="1">Cysteinyl-tRNA synthetase</fullName>
        <shortName evidence="1">CysRS</shortName>
    </alternativeName>
</protein>